<keyword id="KW-0025">Alternative splicing</keyword>
<keyword id="KW-0472">Membrane</keyword>
<keyword id="KW-0496">Mitochondrion</keyword>
<keyword id="KW-0999">Mitochondrion inner membrane</keyword>
<keyword id="KW-1185">Reference proteome</keyword>
<keyword id="KW-0809">Transit peptide</keyword>
<organism>
    <name type="scientific">Mus musculus</name>
    <name type="common">Mouse</name>
    <dbReference type="NCBI Taxonomy" id="10090"/>
    <lineage>
        <taxon>Eukaryota</taxon>
        <taxon>Metazoa</taxon>
        <taxon>Chordata</taxon>
        <taxon>Craniata</taxon>
        <taxon>Vertebrata</taxon>
        <taxon>Euteleostomi</taxon>
        <taxon>Mammalia</taxon>
        <taxon>Eutheria</taxon>
        <taxon>Euarchontoglires</taxon>
        <taxon>Glires</taxon>
        <taxon>Rodentia</taxon>
        <taxon>Myomorpha</taxon>
        <taxon>Muroidea</taxon>
        <taxon>Muridae</taxon>
        <taxon>Murinae</taxon>
        <taxon>Mus</taxon>
        <taxon>Mus</taxon>
    </lineage>
</organism>
<gene>
    <name type="primary">Coq10b</name>
</gene>
<reference key="1">
    <citation type="journal article" date="2005" name="Science">
        <title>The transcriptional landscape of the mammalian genome.</title>
        <authorList>
            <person name="Carninci P."/>
            <person name="Kasukawa T."/>
            <person name="Katayama S."/>
            <person name="Gough J."/>
            <person name="Frith M.C."/>
            <person name="Maeda N."/>
            <person name="Oyama R."/>
            <person name="Ravasi T."/>
            <person name="Lenhard B."/>
            <person name="Wells C."/>
            <person name="Kodzius R."/>
            <person name="Shimokawa K."/>
            <person name="Bajic V.B."/>
            <person name="Brenner S.E."/>
            <person name="Batalov S."/>
            <person name="Forrest A.R."/>
            <person name="Zavolan M."/>
            <person name="Davis M.J."/>
            <person name="Wilming L.G."/>
            <person name="Aidinis V."/>
            <person name="Allen J.E."/>
            <person name="Ambesi-Impiombato A."/>
            <person name="Apweiler R."/>
            <person name="Aturaliya R.N."/>
            <person name="Bailey T.L."/>
            <person name="Bansal M."/>
            <person name="Baxter L."/>
            <person name="Beisel K.W."/>
            <person name="Bersano T."/>
            <person name="Bono H."/>
            <person name="Chalk A.M."/>
            <person name="Chiu K.P."/>
            <person name="Choudhary V."/>
            <person name="Christoffels A."/>
            <person name="Clutterbuck D.R."/>
            <person name="Crowe M.L."/>
            <person name="Dalla E."/>
            <person name="Dalrymple B.P."/>
            <person name="de Bono B."/>
            <person name="Della Gatta G."/>
            <person name="di Bernardo D."/>
            <person name="Down T."/>
            <person name="Engstrom P."/>
            <person name="Fagiolini M."/>
            <person name="Faulkner G."/>
            <person name="Fletcher C.F."/>
            <person name="Fukushima T."/>
            <person name="Furuno M."/>
            <person name="Futaki S."/>
            <person name="Gariboldi M."/>
            <person name="Georgii-Hemming P."/>
            <person name="Gingeras T.R."/>
            <person name="Gojobori T."/>
            <person name="Green R.E."/>
            <person name="Gustincich S."/>
            <person name="Harbers M."/>
            <person name="Hayashi Y."/>
            <person name="Hensch T.K."/>
            <person name="Hirokawa N."/>
            <person name="Hill D."/>
            <person name="Huminiecki L."/>
            <person name="Iacono M."/>
            <person name="Ikeo K."/>
            <person name="Iwama A."/>
            <person name="Ishikawa T."/>
            <person name="Jakt M."/>
            <person name="Kanapin A."/>
            <person name="Katoh M."/>
            <person name="Kawasawa Y."/>
            <person name="Kelso J."/>
            <person name="Kitamura H."/>
            <person name="Kitano H."/>
            <person name="Kollias G."/>
            <person name="Krishnan S.P."/>
            <person name="Kruger A."/>
            <person name="Kummerfeld S.K."/>
            <person name="Kurochkin I.V."/>
            <person name="Lareau L.F."/>
            <person name="Lazarevic D."/>
            <person name="Lipovich L."/>
            <person name="Liu J."/>
            <person name="Liuni S."/>
            <person name="McWilliam S."/>
            <person name="Madan Babu M."/>
            <person name="Madera M."/>
            <person name="Marchionni L."/>
            <person name="Matsuda H."/>
            <person name="Matsuzawa S."/>
            <person name="Miki H."/>
            <person name="Mignone F."/>
            <person name="Miyake S."/>
            <person name="Morris K."/>
            <person name="Mottagui-Tabar S."/>
            <person name="Mulder N."/>
            <person name="Nakano N."/>
            <person name="Nakauchi H."/>
            <person name="Ng P."/>
            <person name="Nilsson R."/>
            <person name="Nishiguchi S."/>
            <person name="Nishikawa S."/>
            <person name="Nori F."/>
            <person name="Ohara O."/>
            <person name="Okazaki Y."/>
            <person name="Orlando V."/>
            <person name="Pang K.C."/>
            <person name="Pavan W.J."/>
            <person name="Pavesi G."/>
            <person name="Pesole G."/>
            <person name="Petrovsky N."/>
            <person name="Piazza S."/>
            <person name="Reed J."/>
            <person name="Reid J.F."/>
            <person name="Ring B.Z."/>
            <person name="Ringwald M."/>
            <person name="Rost B."/>
            <person name="Ruan Y."/>
            <person name="Salzberg S.L."/>
            <person name="Sandelin A."/>
            <person name="Schneider C."/>
            <person name="Schoenbach C."/>
            <person name="Sekiguchi K."/>
            <person name="Semple C.A."/>
            <person name="Seno S."/>
            <person name="Sessa L."/>
            <person name="Sheng Y."/>
            <person name="Shibata Y."/>
            <person name="Shimada H."/>
            <person name="Shimada K."/>
            <person name="Silva D."/>
            <person name="Sinclair B."/>
            <person name="Sperling S."/>
            <person name="Stupka E."/>
            <person name="Sugiura K."/>
            <person name="Sultana R."/>
            <person name="Takenaka Y."/>
            <person name="Taki K."/>
            <person name="Tammoja K."/>
            <person name="Tan S.L."/>
            <person name="Tang S."/>
            <person name="Taylor M.S."/>
            <person name="Tegner J."/>
            <person name="Teichmann S.A."/>
            <person name="Ueda H.R."/>
            <person name="van Nimwegen E."/>
            <person name="Verardo R."/>
            <person name="Wei C.L."/>
            <person name="Yagi K."/>
            <person name="Yamanishi H."/>
            <person name="Zabarovsky E."/>
            <person name="Zhu S."/>
            <person name="Zimmer A."/>
            <person name="Hide W."/>
            <person name="Bult C."/>
            <person name="Grimmond S.M."/>
            <person name="Teasdale R.D."/>
            <person name="Liu E.T."/>
            <person name="Brusic V."/>
            <person name="Quackenbush J."/>
            <person name="Wahlestedt C."/>
            <person name="Mattick J.S."/>
            <person name="Hume D.A."/>
            <person name="Kai C."/>
            <person name="Sasaki D."/>
            <person name="Tomaru Y."/>
            <person name="Fukuda S."/>
            <person name="Kanamori-Katayama M."/>
            <person name="Suzuki M."/>
            <person name="Aoki J."/>
            <person name="Arakawa T."/>
            <person name="Iida J."/>
            <person name="Imamura K."/>
            <person name="Itoh M."/>
            <person name="Kato T."/>
            <person name="Kawaji H."/>
            <person name="Kawagashira N."/>
            <person name="Kawashima T."/>
            <person name="Kojima M."/>
            <person name="Kondo S."/>
            <person name="Konno H."/>
            <person name="Nakano K."/>
            <person name="Ninomiya N."/>
            <person name="Nishio T."/>
            <person name="Okada M."/>
            <person name="Plessy C."/>
            <person name="Shibata K."/>
            <person name="Shiraki T."/>
            <person name="Suzuki S."/>
            <person name="Tagami M."/>
            <person name="Waki K."/>
            <person name="Watahiki A."/>
            <person name="Okamura-Oho Y."/>
            <person name="Suzuki H."/>
            <person name="Kawai J."/>
            <person name="Hayashizaki Y."/>
        </authorList>
    </citation>
    <scope>NUCLEOTIDE SEQUENCE [LARGE SCALE MRNA] (ISOFORMS 1 AND 2)</scope>
    <source>
        <strain>C57BL/6J</strain>
        <strain>DBA/2J</strain>
        <tissue>Heart</tissue>
        <tissue>Testis</tissue>
    </source>
</reference>
<reference key="2">
    <citation type="journal article" date="2004" name="Genome Res.">
        <title>The status, quality, and expansion of the NIH full-length cDNA project: the Mammalian Gene Collection (MGC).</title>
        <authorList>
            <consortium name="The MGC Project Team"/>
        </authorList>
    </citation>
    <scope>NUCLEOTIDE SEQUENCE [LARGE SCALE MRNA] (ISOFORM 1)</scope>
    <source>
        <tissue>Limb</tissue>
    </source>
</reference>
<reference key="3">
    <citation type="journal article" date="2010" name="Cell">
        <title>A tissue-specific atlas of mouse protein phosphorylation and expression.</title>
        <authorList>
            <person name="Huttlin E.L."/>
            <person name="Jedrychowski M.P."/>
            <person name="Elias J.E."/>
            <person name="Goswami T."/>
            <person name="Rad R."/>
            <person name="Beausoleil S.A."/>
            <person name="Villen J."/>
            <person name="Haas W."/>
            <person name="Sowa M.E."/>
            <person name="Gygi S.P."/>
        </authorList>
    </citation>
    <scope>IDENTIFICATION BY MASS SPECTROMETRY [LARGE SCALE ANALYSIS]</scope>
    <source>
        <tissue>Brown adipose tissue</tissue>
    </source>
</reference>
<feature type="transit peptide" description="Mitochondrion" evidence="2">
    <location>
        <begin position="1"/>
        <end position="39"/>
    </location>
</feature>
<feature type="chain" id="PRO_0000228648" description="Coenzyme Q-binding protein COQ10 homolog B, mitochondrial">
    <location>
        <begin position="40"/>
        <end position="240"/>
    </location>
</feature>
<feature type="splice variant" id="VSP_017686" description="In isoform 2." evidence="3">
    <location>
        <begin position="38"/>
        <end position="87"/>
    </location>
</feature>
<feature type="sequence conflict" description="In Ref. 1; BAE40237/BAE27020/BAB24648." evidence="4" ref="1">
    <original>T</original>
    <variation>P</variation>
    <location>
        <position position="28"/>
    </location>
</feature>
<name>CQ10B_MOUSE</name>
<sequence>MAARTSQRALARVASGCHPKSTTVTEATARGSARDVRHLAACGVLINRTLPPCAAVLPKEICARTFFRISAPLVNKRKEYSERRILGYSMQEMYDVVSGMEDYQHFVPWCKKSDIISRRSGYCKTRLEVGFPPVLERYTSIVTLVKPHLVKASCTDGKLFNHLETIWRFSPGLPGYPRTCTLDFSISFEFRSLLHSQLATLFFDEVVKQMVAAFERRACKLYGPETNIPRELMLHEIHHT</sequence>
<comment type="function">
    <text evidence="1">Required for the function of coenzyme Q in the respiratory chain. May serve as a chaperone or may be involved in the transport of Q6 from its site of synthesis to the catalytic sites of the respiratory complexes (By similarity).</text>
</comment>
<comment type="subunit">
    <text evidence="1">Interacts with coenzyme Q.</text>
</comment>
<comment type="subcellular location">
    <subcellularLocation>
        <location evidence="1">Mitochondrion inner membrane</location>
        <topology evidence="1">Peripheral membrane protein</topology>
        <orientation evidence="1">Matrix side</orientation>
    </subcellularLocation>
</comment>
<comment type="alternative products">
    <event type="alternative splicing"/>
    <isoform>
        <id>Q3THF9-1</id>
        <name>1</name>
        <sequence type="displayed"/>
    </isoform>
    <isoform>
        <id>Q3THF9-2</id>
        <name>2</name>
        <sequence type="described" ref="VSP_017686"/>
    </isoform>
</comment>
<comment type="similarity">
    <text evidence="4">Belongs to the COQ10 family.</text>
</comment>
<comment type="sequence caution" evidence="4">
    <conflict type="erroneous initiation">
        <sequence resource="EMBL-CDS" id="AAH62129"/>
    </conflict>
</comment>
<comment type="sequence caution" evidence="4">
    <conflict type="erroneous initiation">
        <sequence resource="EMBL-CDS" id="BAB24648"/>
    </conflict>
</comment>
<comment type="sequence caution" evidence="4">
    <conflict type="erroneous initiation">
        <sequence resource="EMBL-CDS" id="BAE22900"/>
    </conflict>
</comment>
<comment type="sequence caution" evidence="4">
    <conflict type="erroneous initiation">
        <sequence resource="EMBL-CDS" id="BAE40661"/>
    </conflict>
</comment>
<dbReference type="EMBL" id="AK006551">
    <property type="protein sequence ID" value="BAB24648.1"/>
    <property type="status" value="ALT_INIT"/>
    <property type="molecule type" value="mRNA"/>
</dbReference>
<dbReference type="EMBL" id="AK136258">
    <property type="protein sequence ID" value="BAE22900.1"/>
    <property type="status" value="ALT_INIT"/>
    <property type="molecule type" value="mRNA"/>
</dbReference>
<dbReference type="EMBL" id="AK146260">
    <property type="protein sequence ID" value="BAE27020.1"/>
    <property type="molecule type" value="mRNA"/>
</dbReference>
<dbReference type="EMBL" id="AK168293">
    <property type="protein sequence ID" value="BAE40237.1"/>
    <property type="molecule type" value="mRNA"/>
</dbReference>
<dbReference type="EMBL" id="AK168837">
    <property type="protein sequence ID" value="BAE40661.1"/>
    <property type="status" value="ALT_INIT"/>
    <property type="molecule type" value="mRNA"/>
</dbReference>
<dbReference type="EMBL" id="BC062129">
    <property type="protein sequence ID" value="AAH62129.1"/>
    <property type="status" value="ALT_INIT"/>
    <property type="molecule type" value="mRNA"/>
</dbReference>
<dbReference type="RefSeq" id="NP_001034799.1">
    <property type="nucleotide sequence ID" value="NM_001039710.1"/>
</dbReference>
<dbReference type="RefSeq" id="NP_080700.3">
    <property type="nucleotide sequence ID" value="NM_026424.3"/>
</dbReference>
<dbReference type="SMR" id="Q3THF9"/>
<dbReference type="BioGRID" id="212502">
    <property type="interactions" value="1"/>
</dbReference>
<dbReference type="FunCoup" id="Q3THF9">
    <property type="interactions" value="1104"/>
</dbReference>
<dbReference type="STRING" id="10090.ENSMUSP00000027125"/>
<dbReference type="iPTMnet" id="Q3THF9"/>
<dbReference type="PhosphoSitePlus" id="Q3THF9"/>
<dbReference type="PaxDb" id="10090-ENSMUSP00000027125"/>
<dbReference type="ProteomicsDB" id="283819">
    <molecule id="Q3THF9-1"/>
</dbReference>
<dbReference type="ProteomicsDB" id="283820">
    <molecule id="Q3THF9-2"/>
</dbReference>
<dbReference type="Pumba" id="Q3THF9"/>
<dbReference type="GeneID" id="67876"/>
<dbReference type="KEGG" id="mmu:67876"/>
<dbReference type="UCSC" id="uc007azz.1">
    <molecule id="Q3THF9-1"/>
    <property type="organism name" value="mouse"/>
</dbReference>
<dbReference type="AGR" id="MGI:1915126"/>
<dbReference type="CTD" id="80219"/>
<dbReference type="MGI" id="MGI:1915126">
    <property type="gene designation" value="Coq10b"/>
</dbReference>
<dbReference type="eggNOG" id="KOG3177">
    <property type="taxonomic scope" value="Eukaryota"/>
</dbReference>
<dbReference type="InParanoid" id="Q3THF9"/>
<dbReference type="OrthoDB" id="292693at2759"/>
<dbReference type="PhylomeDB" id="Q3THF9"/>
<dbReference type="TreeFam" id="TF314447"/>
<dbReference type="Reactome" id="R-MMU-611105">
    <property type="pathway name" value="Respiratory electron transport"/>
</dbReference>
<dbReference type="Reactome" id="R-MMU-9864848">
    <property type="pathway name" value="Complex IV assembly"/>
</dbReference>
<dbReference type="BioGRID-ORCS" id="67876">
    <property type="hits" value="2 hits in 77 CRISPR screens"/>
</dbReference>
<dbReference type="ChiTaRS" id="Coq10b">
    <property type="organism name" value="mouse"/>
</dbReference>
<dbReference type="PRO" id="PR:Q3THF9"/>
<dbReference type="Proteomes" id="UP000000589">
    <property type="component" value="Unplaced"/>
</dbReference>
<dbReference type="RNAct" id="Q3THF9">
    <property type="molecule type" value="protein"/>
</dbReference>
<dbReference type="GO" id="GO:0005743">
    <property type="term" value="C:mitochondrial inner membrane"/>
    <property type="evidence" value="ECO:0007669"/>
    <property type="project" value="UniProtKB-SubCell"/>
</dbReference>
<dbReference type="GO" id="GO:0005739">
    <property type="term" value="C:mitochondrion"/>
    <property type="evidence" value="ECO:0007005"/>
    <property type="project" value="MGI"/>
</dbReference>
<dbReference type="GO" id="GO:0048039">
    <property type="term" value="F:ubiquinone binding"/>
    <property type="evidence" value="ECO:0007669"/>
    <property type="project" value="InterPro"/>
</dbReference>
<dbReference type="GO" id="GO:0045333">
    <property type="term" value="P:cellular respiration"/>
    <property type="evidence" value="ECO:0007669"/>
    <property type="project" value="InterPro"/>
</dbReference>
<dbReference type="CDD" id="cd07813">
    <property type="entry name" value="COQ10p_like"/>
    <property type="match status" value="1"/>
</dbReference>
<dbReference type="FunFam" id="3.30.530.20:FF:000002">
    <property type="entry name" value="Coenzyme Q-binding protein COQ10 homolog, mitochondrial"/>
    <property type="match status" value="1"/>
</dbReference>
<dbReference type="Gene3D" id="3.30.530.20">
    <property type="match status" value="1"/>
</dbReference>
<dbReference type="InterPro" id="IPR044996">
    <property type="entry name" value="COQ10-like"/>
</dbReference>
<dbReference type="InterPro" id="IPR005031">
    <property type="entry name" value="COQ10_START"/>
</dbReference>
<dbReference type="InterPro" id="IPR023393">
    <property type="entry name" value="START-like_dom_sf"/>
</dbReference>
<dbReference type="PANTHER" id="PTHR12901:SF9">
    <property type="entry name" value="COENZYME Q-BINDING PROTEIN COQ10 HOMOLOG B, MITOCHONDRIAL"/>
    <property type="match status" value="1"/>
</dbReference>
<dbReference type="PANTHER" id="PTHR12901">
    <property type="entry name" value="SPERM PROTEIN HOMOLOG"/>
    <property type="match status" value="1"/>
</dbReference>
<dbReference type="Pfam" id="PF03364">
    <property type="entry name" value="Polyketide_cyc"/>
    <property type="match status" value="1"/>
</dbReference>
<dbReference type="SUPFAM" id="SSF55961">
    <property type="entry name" value="Bet v1-like"/>
    <property type="match status" value="1"/>
</dbReference>
<protein>
    <recommendedName>
        <fullName>Coenzyme Q-binding protein COQ10 homolog B, mitochondrial</fullName>
    </recommendedName>
</protein>
<proteinExistence type="evidence at protein level"/>
<accession>Q3THF9</accession>
<accession>Q6P6N0</accession>
<accession>Q9D9R6</accession>
<evidence type="ECO:0000250" key="1"/>
<evidence type="ECO:0000255" key="2"/>
<evidence type="ECO:0000303" key="3">
    <source>
    </source>
</evidence>
<evidence type="ECO:0000305" key="4"/>